<name>RS24A_YEAST</name>
<dbReference type="EMBL" id="U18814">
    <property type="protein sequence ID" value="AAB64613.1"/>
    <property type="molecule type" value="Genomic_DNA"/>
</dbReference>
<dbReference type="EMBL" id="BK006939">
    <property type="protein sequence ID" value="DAA07733.1"/>
    <property type="molecule type" value="Genomic_DNA"/>
</dbReference>
<dbReference type="PIR" id="S48410">
    <property type="entry name" value="S48410"/>
</dbReference>
<dbReference type="RefSeq" id="NP_010997.3">
    <property type="nucleotide sequence ID" value="NM_001178965.3"/>
</dbReference>
<dbReference type="PDB" id="3J16">
    <property type="method" value="EM"/>
    <property type="chains" value="D=1-135"/>
</dbReference>
<dbReference type="PDB" id="3J6X">
    <property type="method" value="EM"/>
    <property type="resolution" value="6.10 A"/>
    <property type="chains" value="24=1-135"/>
</dbReference>
<dbReference type="PDB" id="3J6Y">
    <property type="method" value="EM"/>
    <property type="resolution" value="6.10 A"/>
    <property type="chains" value="24=1-135"/>
</dbReference>
<dbReference type="PDB" id="3J77">
    <property type="method" value="EM"/>
    <property type="resolution" value="6.20 A"/>
    <property type="chains" value="24=1-135"/>
</dbReference>
<dbReference type="PDB" id="3J78">
    <property type="method" value="EM"/>
    <property type="resolution" value="6.30 A"/>
    <property type="chains" value="24=1-135"/>
</dbReference>
<dbReference type="PDB" id="4U3M">
    <property type="method" value="X-ray"/>
    <property type="resolution" value="3.00 A"/>
    <property type="chains" value="D4/d4=2-135"/>
</dbReference>
<dbReference type="PDB" id="4U3N">
    <property type="method" value="X-ray"/>
    <property type="resolution" value="3.20 A"/>
    <property type="chains" value="D4/d4=2-135"/>
</dbReference>
<dbReference type="PDB" id="4U3U">
    <property type="method" value="X-ray"/>
    <property type="resolution" value="2.90 A"/>
    <property type="chains" value="D4/d4=2-135"/>
</dbReference>
<dbReference type="PDB" id="4U4N">
    <property type="method" value="X-ray"/>
    <property type="resolution" value="3.10 A"/>
    <property type="chains" value="D4/d4=2-135"/>
</dbReference>
<dbReference type="PDB" id="4U4O">
    <property type="method" value="X-ray"/>
    <property type="resolution" value="3.60 A"/>
    <property type="chains" value="D4/d4=2-135"/>
</dbReference>
<dbReference type="PDB" id="4U4Q">
    <property type="method" value="X-ray"/>
    <property type="resolution" value="3.00 A"/>
    <property type="chains" value="D4/d4=2-135"/>
</dbReference>
<dbReference type="PDB" id="4U4R">
    <property type="method" value="X-ray"/>
    <property type="resolution" value="2.80 A"/>
    <property type="chains" value="D4/d4=2-135"/>
</dbReference>
<dbReference type="PDB" id="4U4U">
    <property type="method" value="X-ray"/>
    <property type="resolution" value="3.00 A"/>
    <property type="chains" value="D4/d4=2-135"/>
</dbReference>
<dbReference type="PDB" id="4U4Y">
    <property type="method" value="X-ray"/>
    <property type="resolution" value="3.20 A"/>
    <property type="chains" value="D4/d4=2-135"/>
</dbReference>
<dbReference type="PDB" id="4U4Z">
    <property type="method" value="X-ray"/>
    <property type="resolution" value="3.10 A"/>
    <property type="chains" value="D4/d4=2-135"/>
</dbReference>
<dbReference type="PDB" id="4U50">
    <property type="method" value="X-ray"/>
    <property type="resolution" value="3.20 A"/>
    <property type="chains" value="D4/d4=2-135"/>
</dbReference>
<dbReference type="PDB" id="4U51">
    <property type="method" value="X-ray"/>
    <property type="resolution" value="3.20 A"/>
    <property type="chains" value="D4/d4=2-135"/>
</dbReference>
<dbReference type="PDB" id="4U52">
    <property type="method" value="X-ray"/>
    <property type="resolution" value="3.00 A"/>
    <property type="chains" value="D4/d4=2-135"/>
</dbReference>
<dbReference type="PDB" id="4U53">
    <property type="method" value="X-ray"/>
    <property type="resolution" value="3.30 A"/>
    <property type="chains" value="D4/d4=2-135"/>
</dbReference>
<dbReference type="PDB" id="4U55">
    <property type="method" value="X-ray"/>
    <property type="resolution" value="3.20 A"/>
    <property type="chains" value="D4/d4=2-135"/>
</dbReference>
<dbReference type="PDB" id="4U56">
    <property type="method" value="X-ray"/>
    <property type="resolution" value="3.45 A"/>
    <property type="chains" value="D4/d4=2-135"/>
</dbReference>
<dbReference type="PDB" id="4U6F">
    <property type="method" value="X-ray"/>
    <property type="resolution" value="3.10 A"/>
    <property type="chains" value="D4/d4=2-135"/>
</dbReference>
<dbReference type="PDB" id="4V6I">
    <property type="method" value="EM"/>
    <property type="resolution" value="8.80 A"/>
    <property type="chains" value="AU=1-135"/>
</dbReference>
<dbReference type="PDB" id="4V88">
    <property type="method" value="X-ray"/>
    <property type="resolution" value="3.00 A"/>
    <property type="chains" value="AY/CY=1-135"/>
</dbReference>
<dbReference type="PDB" id="4V8Y">
    <property type="method" value="EM"/>
    <property type="resolution" value="4.30 A"/>
    <property type="chains" value="AY=1-135"/>
</dbReference>
<dbReference type="PDB" id="4V8Z">
    <property type="method" value="EM"/>
    <property type="resolution" value="6.60 A"/>
    <property type="chains" value="AY=1-135"/>
</dbReference>
<dbReference type="PDB" id="4V92">
    <property type="method" value="EM"/>
    <property type="resolution" value="3.70 A"/>
    <property type="chains" value="Y=2-135"/>
</dbReference>
<dbReference type="PDB" id="5DAT">
    <property type="method" value="X-ray"/>
    <property type="resolution" value="3.15 A"/>
    <property type="chains" value="D4/d4=2-135"/>
</dbReference>
<dbReference type="PDB" id="5DC3">
    <property type="method" value="X-ray"/>
    <property type="resolution" value="3.25 A"/>
    <property type="chains" value="D4/d4=2-135"/>
</dbReference>
<dbReference type="PDB" id="5DGE">
    <property type="method" value="X-ray"/>
    <property type="resolution" value="3.45 A"/>
    <property type="chains" value="D4/d4=2-135"/>
</dbReference>
<dbReference type="PDB" id="5DGF">
    <property type="method" value="X-ray"/>
    <property type="resolution" value="3.30 A"/>
    <property type="chains" value="D4/d4=2-135"/>
</dbReference>
<dbReference type="PDB" id="5DGV">
    <property type="method" value="X-ray"/>
    <property type="resolution" value="3.10 A"/>
    <property type="chains" value="D4/d4=2-135"/>
</dbReference>
<dbReference type="PDB" id="5FCI">
    <property type="method" value="X-ray"/>
    <property type="resolution" value="3.40 A"/>
    <property type="chains" value="D4/d4=2-135"/>
</dbReference>
<dbReference type="PDB" id="5FCJ">
    <property type="method" value="X-ray"/>
    <property type="resolution" value="3.10 A"/>
    <property type="chains" value="D4/d4=2-135"/>
</dbReference>
<dbReference type="PDB" id="5I4L">
    <property type="method" value="X-ray"/>
    <property type="resolution" value="3.10 A"/>
    <property type="chains" value="D4/d4=2-135"/>
</dbReference>
<dbReference type="PDB" id="5JUO">
    <property type="method" value="EM"/>
    <property type="resolution" value="4.00 A"/>
    <property type="chains" value="VB=1-135"/>
</dbReference>
<dbReference type="PDB" id="5JUP">
    <property type="method" value="EM"/>
    <property type="resolution" value="3.50 A"/>
    <property type="chains" value="VB=1-135"/>
</dbReference>
<dbReference type="PDB" id="5JUS">
    <property type="method" value="EM"/>
    <property type="resolution" value="4.20 A"/>
    <property type="chains" value="VB=1-135"/>
</dbReference>
<dbReference type="PDB" id="5JUT">
    <property type="method" value="EM"/>
    <property type="resolution" value="4.00 A"/>
    <property type="chains" value="VB=1-135"/>
</dbReference>
<dbReference type="PDB" id="5JUU">
    <property type="method" value="EM"/>
    <property type="resolution" value="4.00 A"/>
    <property type="chains" value="VB=1-135"/>
</dbReference>
<dbReference type="PDB" id="5LL6">
    <property type="method" value="EM"/>
    <property type="resolution" value="3.90 A"/>
    <property type="chains" value="d=1-135"/>
</dbReference>
<dbReference type="PDB" id="5LYB">
    <property type="method" value="X-ray"/>
    <property type="resolution" value="3.25 A"/>
    <property type="chains" value="D4/d4=2-135"/>
</dbReference>
<dbReference type="PDB" id="5M1J">
    <property type="method" value="EM"/>
    <property type="resolution" value="3.30 A"/>
    <property type="chains" value="Y2=2-135"/>
</dbReference>
<dbReference type="PDB" id="5MC6">
    <property type="method" value="EM"/>
    <property type="resolution" value="3.80 A"/>
    <property type="chains" value="d=1-135"/>
</dbReference>
<dbReference type="PDB" id="5MEI">
    <property type="method" value="X-ray"/>
    <property type="resolution" value="3.50 A"/>
    <property type="chains" value="Z/d4=2-135"/>
</dbReference>
<dbReference type="PDB" id="5NDG">
    <property type="method" value="X-ray"/>
    <property type="resolution" value="3.70 A"/>
    <property type="chains" value="D4/d4=2-135"/>
</dbReference>
<dbReference type="PDB" id="5NDV">
    <property type="method" value="X-ray"/>
    <property type="resolution" value="3.30 A"/>
    <property type="chains" value="D4/d4=2-135"/>
</dbReference>
<dbReference type="PDB" id="5NDW">
    <property type="method" value="X-ray"/>
    <property type="resolution" value="3.70 A"/>
    <property type="chains" value="D4/d4=2-135"/>
</dbReference>
<dbReference type="PDB" id="5OBM">
    <property type="method" value="X-ray"/>
    <property type="resolution" value="3.40 A"/>
    <property type="chains" value="D4/d4=2-135"/>
</dbReference>
<dbReference type="PDB" id="5ON6">
    <property type="method" value="X-ray"/>
    <property type="resolution" value="3.10 A"/>
    <property type="chains" value="Z/d4=2-135"/>
</dbReference>
<dbReference type="PDB" id="5TBW">
    <property type="method" value="X-ray"/>
    <property type="resolution" value="3.00 A"/>
    <property type="chains" value="Z/d4=2-135"/>
</dbReference>
<dbReference type="PDB" id="5TGA">
    <property type="method" value="X-ray"/>
    <property type="resolution" value="3.30 A"/>
    <property type="chains" value="D4/d4=2-135"/>
</dbReference>
<dbReference type="PDB" id="5TGM">
    <property type="method" value="X-ray"/>
    <property type="resolution" value="3.50 A"/>
    <property type="chains" value="D4/d4=2-135"/>
</dbReference>
<dbReference type="PDB" id="5TZS">
    <property type="method" value="EM"/>
    <property type="resolution" value="5.10 A"/>
    <property type="chains" value="F=1-135"/>
</dbReference>
<dbReference type="PDB" id="5WLC">
    <property type="method" value="EM"/>
    <property type="resolution" value="3.80 A"/>
    <property type="chains" value="LF=1-135"/>
</dbReference>
<dbReference type="PDB" id="5WYJ">
    <property type="method" value="EM"/>
    <property type="resolution" value="8.70 A"/>
    <property type="chains" value="SZ=1-135"/>
</dbReference>
<dbReference type="PDB" id="5WYK">
    <property type="method" value="EM"/>
    <property type="resolution" value="4.50 A"/>
    <property type="chains" value="SZ=1-135"/>
</dbReference>
<dbReference type="PDB" id="6EML">
    <property type="method" value="EM"/>
    <property type="resolution" value="3.60 A"/>
    <property type="chains" value="d=1-135"/>
</dbReference>
<dbReference type="PDB" id="6FAI">
    <property type="method" value="EM"/>
    <property type="resolution" value="3.40 A"/>
    <property type="chains" value="Y=1-135"/>
</dbReference>
<dbReference type="PDB" id="6GQ1">
    <property type="method" value="EM"/>
    <property type="resolution" value="4.40 A"/>
    <property type="chains" value="AO=2-135"/>
</dbReference>
<dbReference type="PDB" id="6GQB">
    <property type="method" value="EM"/>
    <property type="resolution" value="3.90 A"/>
    <property type="chains" value="AO=2-135"/>
</dbReference>
<dbReference type="PDB" id="6GQV">
    <property type="method" value="EM"/>
    <property type="resolution" value="4.00 A"/>
    <property type="chains" value="AO=2-135"/>
</dbReference>
<dbReference type="PDB" id="6HHQ">
    <property type="method" value="X-ray"/>
    <property type="resolution" value="3.10 A"/>
    <property type="chains" value="Z/d4=1-135"/>
</dbReference>
<dbReference type="PDB" id="6I7O">
    <property type="method" value="EM"/>
    <property type="resolution" value="5.30 A"/>
    <property type="chains" value="d/db=2-135"/>
</dbReference>
<dbReference type="PDB" id="6KE6">
    <property type="method" value="EM"/>
    <property type="resolution" value="3.40 A"/>
    <property type="chains" value="SZ=1-135"/>
</dbReference>
<dbReference type="PDB" id="6LQP">
    <property type="method" value="EM"/>
    <property type="resolution" value="3.20 A"/>
    <property type="chains" value="SZ=1-135"/>
</dbReference>
<dbReference type="PDB" id="6LQQ">
    <property type="method" value="EM"/>
    <property type="resolution" value="4.10 A"/>
    <property type="chains" value="SZ=1-135"/>
</dbReference>
<dbReference type="PDB" id="6LQR">
    <property type="method" value="EM"/>
    <property type="resolution" value="8.60 A"/>
    <property type="chains" value="SZ=1-135"/>
</dbReference>
<dbReference type="PDB" id="6LQS">
    <property type="method" value="EM"/>
    <property type="resolution" value="3.80 A"/>
    <property type="chains" value="SZ=1-135"/>
</dbReference>
<dbReference type="PDB" id="6LQT">
    <property type="method" value="EM"/>
    <property type="resolution" value="4.90 A"/>
    <property type="chains" value="SZ=1-135"/>
</dbReference>
<dbReference type="PDB" id="6LQU">
    <property type="method" value="EM"/>
    <property type="resolution" value="3.70 A"/>
    <property type="chains" value="SZ=1-135"/>
</dbReference>
<dbReference type="PDB" id="6LQV">
    <property type="method" value="EM"/>
    <property type="resolution" value="4.80 A"/>
    <property type="chains" value="SZ=1-135"/>
</dbReference>
<dbReference type="PDB" id="6Q8Y">
    <property type="method" value="EM"/>
    <property type="resolution" value="3.10 A"/>
    <property type="chains" value="d=2-133"/>
</dbReference>
<dbReference type="PDB" id="6RBD">
    <property type="method" value="EM"/>
    <property type="resolution" value="3.47 A"/>
    <property type="chains" value="Y=1-135"/>
</dbReference>
<dbReference type="PDB" id="6RBE">
    <property type="method" value="EM"/>
    <property type="resolution" value="3.80 A"/>
    <property type="chains" value="Y=1-135"/>
</dbReference>
<dbReference type="PDB" id="6S47">
    <property type="method" value="EM"/>
    <property type="resolution" value="3.28 A"/>
    <property type="chains" value="BZ=2-135"/>
</dbReference>
<dbReference type="PDB" id="6SNT">
    <property type="method" value="EM"/>
    <property type="resolution" value="2.80 A"/>
    <property type="chains" value="Y=1-135"/>
</dbReference>
<dbReference type="PDB" id="6SV4">
    <property type="method" value="EM"/>
    <property type="resolution" value="3.30 A"/>
    <property type="chains" value="d/db/dc=1-135"/>
</dbReference>
<dbReference type="PDB" id="6T4Q">
    <property type="method" value="EM"/>
    <property type="resolution" value="2.60 A"/>
    <property type="chains" value="SY=2-135"/>
</dbReference>
<dbReference type="PDB" id="6T7I">
    <property type="method" value="EM"/>
    <property type="resolution" value="3.20 A"/>
    <property type="chains" value="SY=1-135"/>
</dbReference>
<dbReference type="PDB" id="6T7T">
    <property type="method" value="EM"/>
    <property type="resolution" value="3.10 A"/>
    <property type="chains" value="SY=1-135"/>
</dbReference>
<dbReference type="PDB" id="6T83">
    <property type="method" value="EM"/>
    <property type="resolution" value="4.00 A"/>
    <property type="chains" value="Yb/z=1-135"/>
</dbReference>
<dbReference type="PDB" id="6TB3">
    <property type="method" value="EM"/>
    <property type="resolution" value="2.80 A"/>
    <property type="chains" value="d=2-135"/>
</dbReference>
<dbReference type="PDB" id="6TNU">
    <property type="method" value="EM"/>
    <property type="resolution" value="3.10 A"/>
    <property type="chains" value="d=2-135"/>
</dbReference>
<dbReference type="PDB" id="6WDR">
    <property type="method" value="EM"/>
    <property type="resolution" value="3.70 A"/>
    <property type="chains" value="Y=2-135"/>
</dbReference>
<dbReference type="PDB" id="6WOO">
    <property type="method" value="EM"/>
    <property type="resolution" value="2.90 A"/>
    <property type="chains" value="YY=2-135"/>
</dbReference>
<dbReference type="PDB" id="6XIQ">
    <property type="method" value="EM"/>
    <property type="resolution" value="4.20 A"/>
    <property type="chains" value="AO=1-135"/>
</dbReference>
<dbReference type="PDB" id="6XIR">
    <property type="method" value="EM"/>
    <property type="resolution" value="3.20 A"/>
    <property type="chains" value="AO=1-135"/>
</dbReference>
<dbReference type="PDB" id="6Y7C">
    <property type="method" value="EM"/>
    <property type="resolution" value="3.80 A"/>
    <property type="chains" value="Y=1-135"/>
</dbReference>
<dbReference type="PDB" id="6Z6J">
    <property type="method" value="EM"/>
    <property type="resolution" value="3.40 A"/>
    <property type="chains" value="SY=1-135"/>
</dbReference>
<dbReference type="PDB" id="6Z6K">
    <property type="method" value="EM"/>
    <property type="resolution" value="3.40 A"/>
    <property type="chains" value="SY=1-135"/>
</dbReference>
<dbReference type="PDB" id="6ZCE">
    <property type="method" value="EM"/>
    <property type="resolution" value="5.30 A"/>
    <property type="chains" value="Z=1-135"/>
</dbReference>
<dbReference type="PDB" id="6ZQB">
    <property type="method" value="EM"/>
    <property type="resolution" value="3.90 A"/>
    <property type="chains" value="DY=1-135"/>
</dbReference>
<dbReference type="PDB" id="6ZQC">
    <property type="method" value="EM"/>
    <property type="resolution" value="3.80 A"/>
    <property type="chains" value="DY=1-135"/>
</dbReference>
<dbReference type="PDB" id="6ZQD">
    <property type="method" value="EM"/>
    <property type="resolution" value="3.80 A"/>
    <property type="chains" value="DY=1-135"/>
</dbReference>
<dbReference type="PDB" id="6ZQE">
    <property type="method" value="EM"/>
    <property type="resolution" value="7.10 A"/>
    <property type="chains" value="DY=1-135"/>
</dbReference>
<dbReference type="PDB" id="6ZQF">
    <property type="method" value="EM"/>
    <property type="resolution" value="4.90 A"/>
    <property type="chains" value="DY=1-135"/>
</dbReference>
<dbReference type="PDB" id="6ZQG">
    <property type="method" value="EM"/>
    <property type="resolution" value="3.50 A"/>
    <property type="chains" value="DY=1-135"/>
</dbReference>
<dbReference type="PDB" id="6ZU9">
    <property type="method" value="EM"/>
    <property type="resolution" value="6.20 A"/>
    <property type="chains" value="d=1-135"/>
</dbReference>
<dbReference type="PDB" id="6ZVI">
    <property type="method" value="EM"/>
    <property type="resolution" value="3.00 A"/>
    <property type="chains" value="I=2-135"/>
</dbReference>
<dbReference type="PDB" id="7A1G">
    <property type="method" value="EM"/>
    <property type="resolution" value="3.00 A"/>
    <property type="chains" value="d=2-135"/>
</dbReference>
<dbReference type="PDB" id="7AJT">
    <property type="method" value="EM"/>
    <property type="resolution" value="4.60 A"/>
    <property type="chains" value="DY=1-135"/>
</dbReference>
<dbReference type="PDB" id="7AJU">
    <property type="method" value="EM"/>
    <property type="resolution" value="3.80 A"/>
    <property type="chains" value="DY=1-135"/>
</dbReference>
<dbReference type="PDB" id="7B7D">
    <property type="method" value="EM"/>
    <property type="resolution" value="3.30 A"/>
    <property type="chains" value="d=2-135"/>
</dbReference>
<dbReference type="PDB" id="7D4I">
    <property type="method" value="EM"/>
    <property type="resolution" value="4.00 A"/>
    <property type="chains" value="SZ=1-135"/>
</dbReference>
<dbReference type="PDB" id="7D5T">
    <property type="method" value="EM"/>
    <property type="resolution" value="6.00 A"/>
    <property type="chains" value="SZ=1-135"/>
</dbReference>
<dbReference type="PDB" id="7D63">
    <property type="method" value="EM"/>
    <property type="resolution" value="12.30 A"/>
    <property type="chains" value="SZ=1-135"/>
</dbReference>
<dbReference type="PDB" id="7MPI">
    <property type="method" value="EM"/>
    <property type="resolution" value="3.05 A"/>
    <property type="chains" value="BY=2-135"/>
</dbReference>
<dbReference type="PDB" id="7MPJ">
    <property type="method" value="EM"/>
    <property type="resolution" value="2.70 A"/>
    <property type="chains" value="BY=2-135"/>
</dbReference>
<dbReference type="PDB" id="7N8B">
    <property type="method" value="EM"/>
    <property type="resolution" value="3.05 A"/>
    <property type="chains" value="BY=2-135"/>
</dbReference>
<dbReference type="PDB" id="7NRC">
    <property type="method" value="EM"/>
    <property type="resolution" value="3.90 A"/>
    <property type="chains" value="Sd=2-135"/>
</dbReference>
<dbReference type="PDB" id="7NRD">
    <property type="method" value="EM"/>
    <property type="resolution" value="4.36 A"/>
    <property type="chains" value="Sd=2-135"/>
</dbReference>
<dbReference type="PDB" id="7SUK">
    <property type="method" value="EM"/>
    <property type="resolution" value="3.99 A"/>
    <property type="chains" value="LF=4-93"/>
</dbReference>
<dbReference type="PDB" id="7WTL">
    <property type="method" value="EM"/>
    <property type="resolution" value="3.30 A"/>
    <property type="chains" value="SY=1-135"/>
</dbReference>
<dbReference type="PDB" id="7WTM">
    <property type="method" value="EM"/>
    <property type="resolution" value="3.50 A"/>
    <property type="chains" value="SY=1-135"/>
</dbReference>
<dbReference type="PDB" id="7WTN">
    <property type="method" value="EM"/>
    <property type="resolution" value="3.40 A"/>
    <property type="chains" value="SY=1-135"/>
</dbReference>
<dbReference type="PDB" id="7WTO">
    <property type="method" value="EM"/>
    <property type="resolution" value="3.50 A"/>
    <property type="chains" value="SY=1-135"/>
</dbReference>
<dbReference type="PDB" id="7WTP">
    <property type="method" value="EM"/>
    <property type="resolution" value="3.80 A"/>
    <property type="chains" value="SY=1-135"/>
</dbReference>
<dbReference type="PDB" id="7WTQ">
    <property type="method" value="EM"/>
    <property type="resolution" value="3.70 A"/>
    <property type="chains" value="SY=1-135"/>
</dbReference>
<dbReference type="PDB" id="7WTR">
    <property type="method" value="EM"/>
    <property type="resolution" value="3.50 A"/>
    <property type="chains" value="SY=1-135"/>
</dbReference>
<dbReference type="PDB" id="7ZPQ">
    <property type="method" value="EM"/>
    <property type="resolution" value="3.47 A"/>
    <property type="chains" value="AY=2-135"/>
</dbReference>
<dbReference type="PDB" id="7ZRS">
    <property type="method" value="EM"/>
    <property type="resolution" value="4.80 A"/>
    <property type="chains" value="AY=2-135"/>
</dbReference>
<dbReference type="PDB" id="7ZUW">
    <property type="method" value="EM"/>
    <property type="resolution" value="4.30 A"/>
    <property type="chains" value="AY=2-135"/>
</dbReference>
<dbReference type="PDB" id="7ZUX">
    <property type="method" value="EM"/>
    <property type="resolution" value="2.50 A"/>
    <property type="chains" value="DY=2-135"/>
</dbReference>
<dbReference type="PDB" id="7ZW0">
    <property type="method" value="EM"/>
    <property type="resolution" value="2.40 A"/>
    <property type="chains" value="sd=1-135"/>
</dbReference>
<dbReference type="PDB" id="8BN3">
    <property type="method" value="EM"/>
    <property type="resolution" value="2.40 A"/>
    <property type="chains" value="D4=2-135"/>
</dbReference>
<dbReference type="PDB" id="8BQD">
    <property type="method" value="EM"/>
    <property type="resolution" value="3.90 A"/>
    <property type="chains" value="d=2-135"/>
</dbReference>
<dbReference type="PDB" id="8BQX">
    <property type="method" value="EM"/>
    <property type="resolution" value="3.80 A"/>
    <property type="chains" value="d=2-135"/>
</dbReference>
<dbReference type="PDB" id="8C00">
    <property type="method" value="EM"/>
    <property type="resolution" value="2.90 A"/>
    <property type="chains" value="d=1-135"/>
</dbReference>
<dbReference type="PDB" id="8C01">
    <property type="method" value="EM"/>
    <property type="resolution" value="2.70 A"/>
    <property type="chains" value="d=1-135"/>
</dbReference>
<dbReference type="PDB" id="8C83">
    <property type="method" value="EM"/>
    <property type="resolution" value="3.00 A"/>
    <property type="chains" value="d=1-135"/>
</dbReference>
<dbReference type="PDB" id="8CAH">
    <property type="method" value="EM"/>
    <property type="resolution" value="3.00 A"/>
    <property type="chains" value="d=1-135"/>
</dbReference>
<dbReference type="PDB" id="8CAS">
    <property type="method" value="EM"/>
    <property type="resolution" value="3.30 A"/>
    <property type="chains" value="d=1-135"/>
</dbReference>
<dbReference type="PDB" id="8CBJ">
    <property type="method" value="EM"/>
    <property type="resolution" value="3.80 A"/>
    <property type="chains" value="Y=1-135"/>
</dbReference>
<dbReference type="PDB" id="8CCS">
    <property type="method" value="EM"/>
    <property type="resolution" value="1.97 A"/>
    <property type="chains" value="0=1-135"/>
</dbReference>
<dbReference type="PDB" id="8CDL">
    <property type="method" value="EM"/>
    <property type="resolution" value="2.72 A"/>
    <property type="chains" value="0=1-135"/>
</dbReference>
<dbReference type="PDB" id="8CDR">
    <property type="method" value="EM"/>
    <property type="resolution" value="2.04 A"/>
    <property type="chains" value="0=1-135"/>
</dbReference>
<dbReference type="PDB" id="8CEH">
    <property type="method" value="EM"/>
    <property type="resolution" value="2.05 A"/>
    <property type="chains" value="0=1-135"/>
</dbReference>
<dbReference type="PDB" id="8CF5">
    <property type="method" value="EM"/>
    <property type="resolution" value="2.71 A"/>
    <property type="chains" value="0=1-135"/>
</dbReference>
<dbReference type="PDB" id="8CG8">
    <property type="method" value="EM"/>
    <property type="resolution" value="2.57 A"/>
    <property type="chains" value="0=1-135"/>
</dbReference>
<dbReference type="PDB" id="8CGN">
    <property type="method" value="EM"/>
    <property type="resolution" value="2.28 A"/>
    <property type="chains" value="0=1-135"/>
</dbReference>
<dbReference type="PDB" id="8CIV">
    <property type="method" value="EM"/>
    <property type="resolution" value="2.47 A"/>
    <property type="chains" value="0=1-135"/>
</dbReference>
<dbReference type="PDB" id="8CKU">
    <property type="method" value="EM"/>
    <property type="resolution" value="3.11 A"/>
    <property type="chains" value="0=1-135"/>
</dbReference>
<dbReference type="PDB" id="8CMJ">
    <property type="method" value="EM"/>
    <property type="resolution" value="3.79 A"/>
    <property type="chains" value="0=1-135"/>
</dbReference>
<dbReference type="PDB" id="8EUB">
    <property type="method" value="EM"/>
    <property type="resolution" value="2.52 A"/>
    <property type="chains" value="BY=1-135"/>
</dbReference>
<dbReference type="PDB" id="8EVP">
    <property type="method" value="EM"/>
    <property type="resolution" value="2.38 A"/>
    <property type="chains" value="BY=1-135"/>
</dbReference>
<dbReference type="PDB" id="8EVQ">
    <property type="method" value="EM"/>
    <property type="resolution" value="2.72 A"/>
    <property type="chains" value="BY=1-135"/>
</dbReference>
<dbReference type="PDB" id="8EVR">
    <property type="method" value="EM"/>
    <property type="resolution" value="2.87 A"/>
    <property type="chains" value="BY=1-135"/>
</dbReference>
<dbReference type="PDB" id="8EVS">
    <property type="method" value="EM"/>
    <property type="resolution" value="2.62 A"/>
    <property type="chains" value="BY=1-135"/>
</dbReference>
<dbReference type="PDB" id="8EVT">
    <property type="method" value="EM"/>
    <property type="resolution" value="2.20 A"/>
    <property type="chains" value="BY=1-135"/>
</dbReference>
<dbReference type="PDB" id="8EWB">
    <property type="method" value="EM"/>
    <property type="resolution" value="2.87 A"/>
    <property type="chains" value="BY=1-135"/>
</dbReference>
<dbReference type="PDB" id="8EWC">
    <property type="method" value="EM"/>
    <property type="resolution" value="2.45 A"/>
    <property type="chains" value="BY=1-135"/>
</dbReference>
<dbReference type="PDB" id="8K2D">
    <property type="method" value="EM"/>
    <property type="resolution" value="3.20 A"/>
    <property type="chains" value="SY=1-135"/>
</dbReference>
<dbReference type="PDB" id="8K82">
    <property type="method" value="EM"/>
    <property type="resolution" value="3.00 A"/>
    <property type="chains" value="SY=1-135"/>
</dbReference>
<dbReference type="PDB" id="8P4V">
    <property type="method" value="X-ray"/>
    <property type="resolution" value="3.16 A"/>
    <property type="chains" value="Z/d4=1-135"/>
</dbReference>
<dbReference type="PDB" id="8P9A">
    <property type="method" value="X-ray"/>
    <property type="resolution" value="2.90 A"/>
    <property type="chains" value="Z/d4=1-135"/>
</dbReference>
<dbReference type="PDB" id="8T2X">
    <property type="method" value="EM"/>
    <property type="resolution" value="2.46 A"/>
    <property type="chains" value="BY=1-135"/>
</dbReference>
<dbReference type="PDB" id="8T2Y">
    <property type="method" value="EM"/>
    <property type="resolution" value="2.20 A"/>
    <property type="chains" value="BY=1-135"/>
</dbReference>
<dbReference type="PDB" id="8T2Z">
    <property type="method" value="EM"/>
    <property type="resolution" value="2.40 A"/>
    <property type="chains" value="BY=1-135"/>
</dbReference>
<dbReference type="PDB" id="8T30">
    <property type="method" value="EM"/>
    <property type="resolution" value="2.88 A"/>
    <property type="chains" value="BY=1-135"/>
</dbReference>
<dbReference type="PDB" id="8T3A">
    <property type="method" value="EM"/>
    <property type="resolution" value="2.86 A"/>
    <property type="chains" value="BY=1-135"/>
</dbReference>
<dbReference type="PDB" id="8T3B">
    <property type="method" value="EM"/>
    <property type="resolution" value="3.08 A"/>
    <property type="chains" value="BY=1-135"/>
</dbReference>
<dbReference type="PDB" id="8T3C">
    <property type="method" value="EM"/>
    <property type="resolution" value="3.86 A"/>
    <property type="chains" value="BY=1-135"/>
</dbReference>
<dbReference type="PDB" id="8T3D">
    <property type="method" value="EM"/>
    <property type="resolution" value="2.95 A"/>
    <property type="chains" value="BY=1-135"/>
</dbReference>
<dbReference type="PDB" id="8T3E">
    <property type="method" value="EM"/>
    <property type="resolution" value="3.04 A"/>
    <property type="chains" value="BY=1-135"/>
</dbReference>
<dbReference type="PDB" id="8T3F">
    <property type="method" value="EM"/>
    <property type="resolution" value="3.09 A"/>
    <property type="chains" value="BY=1-135"/>
</dbReference>
<dbReference type="PDB" id="8UT0">
    <property type="method" value="EM"/>
    <property type="resolution" value="3.22 A"/>
    <property type="chains" value="Sd=2-135"/>
</dbReference>
<dbReference type="PDB" id="8UTI">
    <property type="method" value="EM"/>
    <property type="resolution" value="3.13 A"/>
    <property type="chains" value="Sd=2-135"/>
</dbReference>
<dbReference type="PDB" id="8XU8">
    <property type="method" value="EM"/>
    <property type="resolution" value="3.40 A"/>
    <property type="chains" value="Sd=2-135"/>
</dbReference>
<dbReference type="PDB" id="8Y0U">
    <property type="method" value="EM"/>
    <property type="resolution" value="3.59 A"/>
    <property type="chains" value="SY=1-135"/>
</dbReference>
<dbReference type="PDB" id="8YLD">
    <property type="method" value="EM"/>
    <property type="resolution" value="3.90 A"/>
    <property type="chains" value="Sd=2-135"/>
</dbReference>
<dbReference type="PDB" id="8YLR">
    <property type="method" value="EM"/>
    <property type="resolution" value="3.90 A"/>
    <property type="chains" value="Sd=2-135"/>
</dbReference>
<dbReference type="PDB" id="8Z70">
    <property type="method" value="EM"/>
    <property type="resolution" value="3.20 A"/>
    <property type="chains" value="Sd=2-135"/>
</dbReference>
<dbReference type="PDB" id="8Z71">
    <property type="method" value="EM"/>
    <property type="resolution" value="3.60 A"/>
    <property type="chains" value="Sd=2-135"/>
</dbReference>
<dbReference type="PDB" id="9F9S">
    <property type="method" value="EM"/>
    <property type="resolution" value="2.90 A"/>
    <property type="chains" value="Ry/Sy=1-135"/>
</dbReference>
<dbReference type="PDBsum" id="3J16"/>
<dbReference type="PDBsum" id="3J6X"/>
<dbReference type="PDBsum" id="3J6Y"/>
<dbReference type="PDBsum" id="3J77"/>
<dbReference type="PDBsum" id="3J78"/>
<dbReference type="PDBsum" id="4U3M"/>
<dbReference type="PDBsum" id="4U3N"/>
<dbReference type="PDBsum" id="4U3U"/>
<dbReference type="PDBsum" id="4U4N"/>
<dbReference type="PDBsum" id="4U4O"/>
<dbReference type="PDBsum" id="4U4Q"/>
<dbReference type="PDBsum" id="4U4R"/>
<dbReference type="PDBsum" id="4U4U"/>
<dbReference type="PDBsum" id="4U4Y"/>
<dbReference type="PDBsum" id="4U4Z"/>
<dbReference type="PDBsum" id="4U50"/>
<dbReference type="PDBsum" id="4U51"/>
<dbReference type="PDBsum" id="4U52"/>
<dbReference type="PDBsum" id="4U53"/>
<dbReference type="PDBsum" id="4U55"/>
<dbReference type="PDBsum" id="4U56"/>
<dbReference type="PDBsum" id="4U6F"/>
<dbReference type="PDBsum" id="4V6I"/>
<dbReference type="PDBsum" id="4V88"/>
<dbReference type="PDBsum" id="4V8Y"/>
<dbReference type="PDBsum" id="4V8Z"/>
<dbReference type="PDBsum" id="4V92"/>
<dbReference type="PDBsum" id="5DAT"/>
<dbReference type="PDBsum" id="5DC3"/>
<dbReference type="PDBsum" id="5DGE"/>
<dbReference type="PDBsum" id="5DGF"/>
<dbReference type="PDBsum" id="5DGV"/>
<dbReference type="PDBsum" id="5FCI"/>
<dbReference type="PDBsum" id="5FCJ"/>
<dbReference type="PDBsum" id="5I4L"/>
<dbReference type="PDBsum" id="5JUO"/>
<dbReference type="PDBsum" id="5JUP"/>
<dbReference type="PDBsum" id="5JUS"/>
<dbReference type="PDBsum" id="5JUT"/>
<dbReference type="PDBsum" id="5JUU"/>
<dbReference type="PDBsum" id="5LL6"/>
<dbReference type="PDBsum" id="5LYB"/>
<dbReference type="PDBsum" id="5M1J"/>
<dbReference type="PDBsum" id="5MC6"/>
<dbReference type="PDBsum" id="5MEI"/>
<dbReference type="PDBsum" id="5NDG"/>
<dbReference type="PDBsum" id="5NDV"/>
<dbReference type="PDBsum" id="5NDW"/>
<dbReference type="PDBsum" id="5OBM"/>
<dbReference type="PDBsum" id="5ON6"/>
<dbReference type="PDBsum" id="5TBW"/>
<dbReference type="PDBsum" id="5TGA"/>
<dbReference type="PDBsum" id="5TGM"/>
<dbReference type="PDBsum" id="5TZS"/>
<dbReference type="PDBsum" id="5WLC"/>
<dbReference type="PDBsum" id="5WYJ"/>
<dbReference type="PDBsum" id="5WYK"/>
<dbReference type="PDBsum" id="6EML"/>
<dbReference type="PDBsum" id="6FAI"/>
<dbReference type="PDBsum" id="6GQ1"/>
<dbReference type="PDBsum" id="6GQB"/>
<dbReference type="PDBsum" id="6GQV"/>
<dbReference type="PDBsum" id="6HHQ"/>
<dbReference type="PDBsum" id="6I7O"/>
<dbReference type="PDBsum" id="6KE6"/>
<dbReference type="PDBsum" id="6LQP"/>
<dbReference type="PDBsum" id="6LQQ"/>
<dbReference type="PDBsum" id="6LQR"/>
<dbReference type="PDBsum" id="6LQS"/>
<dbReference type="PDBsum" id="6LQT"/>
<dbReference type="PDBsum" id="6LQU"/>
<dbReference type="PDBsum" id="6LQV"/>
<dbReference type="PDBsum" id="6Q8Y"/>
<dbReference type="PDBsum" id="6RBD"/>
<dbReference type="PDBsum" id="6RBE"/>
<dbReference type="PDBsum" id="6S47"/>
<dbReference type="PDBsum" id="6SNT"/>
<dbReference type="PDBsum" id="6SV4"/>
<dbReference type="PDBsum" id="6T4Q"/>
<dbReference type="PDBsum" id="6T7I"/>
<dbReference type="PDBsum" id="6T7T"/>
<dbReference type="PDBsum" id="6T83"/>
<dbReference type="PDBsum" id="6TB3"/>
<dbReference type="PDBsum" id="6TNU"/>
<dbReference type="PDBsum" id="6WDR"/>
<dbReference type="PDBsum" id="6WOO"/>
<dbReference type="PDBsum" id="6XIQ"/>
<dbReference type="PDBsum" id="6XIR"/>
<dbReference type="PDBsum" id="6Y7C"/>
<dbReference type="PDBsum" id="6Z6J"/>
<dbReference type="PDBsum" id="6Z6K"/>
<dbReference type="PDBsum" id="6ZCE"/>
<dbReference type="PDBsum" id="6ZQB"/>
<dbReference type="PDBsum" id="6ZQC"/>
<dbReference type="PDBsum" id="6ZQD"/>
<dbReference type="PDBsum" id="6ZQE"/>
<dbReference type="PDBsum" id="6ZQF"/>
<dbReference type="PDBsum" id="6ZQG"/>
<dbReference type="PDBsum" id="6ZU9"/>
<dbReference type="PDBsum" id="6ZVI"/>
<dbReference type="PDBsum" id="7A1G"/>
<dbReference type="PDBsum" id="7AJT"/>
<dbReference type="PDBsum" id="7AJU"/>
<dbReference type="PDBsum" id="7B7D"/>
<dbReference type="PDBsum" id="7D4I"/>
<dbReference type="PDBsum" id="7D5T"/>
<dbReference type="PDBsum" id="7D63"/>
<dbReference type="PDBsum" id="7MPI"/>
<dbReference type="PDBsum" id="7MPJ"/>
<dbReference type="PDBsum" id="7N8B"/>
<dbReference type="PDBsum" id="7NRC"/>
<dbReference type="PDBsum" id="7NRD"/>
<dbReference type="PDBsum" id="7SUK"/>
<dbReference type="PDBsum" id="7WTL"/>
<dbReference type="PDBsum" id="7WTM"/>
<dbReference type="PDBsum" id="7WTN"/>
<dbReference type="PDBsum" id="7WTO"/>
<dbReference type="PDBsum" id="7WTP"/>
<dbReference type="PDBsum" id="7WTQ"/>
<dbReference type="PDBsum" id="7WTR"/>
<dbReference type="PDBsum" id="7ZPQ"/>
<dbReference type="PDBsum" id="7ZRS"/>
<dbReference type="PDBsum" id="7ZUW"/>
<dbReference type="PDBsum" id="7ZUX"/>
<dbReference type="PDBsum" id="7ZW0"/>
<dbReference type="PDBsum" id="8BN3"/>
<dbReference type="PDBsum" id="8BQD"/>
<dbReference type="PDBsum" id="8BQX"/>
<dbReference type="PDBsum" id="8C00"/>
<dbReference type="PDBsum" id="8C01"/>
<dbReference type="PDBsum" id="8C83"/>
<dbReference type="PDBsum" id="8CAH"/>
<dbReference type="PDBsum" id="8CAS"/>
<dbReference type="PDBsum" id="8CBJ"/>
<dbReference type="PDBsum" id="8CCS"/>
<dbReference type="PDBsum" id="8CDL"/>
<dbReference type="PDBsum" id="8CDR"/>
<dbReference type="PDBsum" id="8CEH"/>
<dbReference type="PDBsum" id="8CF5"/>
<dbReference type="PDBsum" id="8CG8"/>
<dbReference type="PDBsum" id="8CGN"/>
<dbReference type="PDBsum" id="8CIV"/>
<dbReference type="PDBsum" id="8CKU"/>
<dbReference type="PDBsum" id="8CMJ"/>
<dbReference type="PDBsum" id="8EUB"/>
<dbReference type="PDBsum" id="8EVP"/>
<dbReference type="PDBsum" id="8EVQ"/>
<dbReference type="PDBsum" id="8EVR"/>
<dbReference type="PDBsum" id="8EVS"/>
<dbReference type="PDBsum" id="8EVT"/>
<dbReference type="PDBsum" id="8EWB"/>
<dbReference type="PDBsum" id="8EWC"/>
<dbReference type="PDBsum" id="8K2D"/>
<dbReference type="PDBsum" id="8K82"/>
<dbReference type="PDBsum" id="8P4V"/>
<dbReference type="PDBsum" id="8P9A"/>
<dbReference type="PDBsum" id="8T2X"/>
<dbReference type="PDBsum" id="8T2Y"/>
<dbReference type="PDBsum" id="8T2Z"/>
<dbReference type="PDBsum" id="8T30"/>
<dbReference type="PDBsum" id="8T3A"/>
<dbReference type="PDBsum" id="8T3B"/>
<dbReference type="PDBsum" id="8T3C"/>
<dbReference type="PDBsum" id="8T3D"/>
<dbReference type="PDBsum" id="8T3E"/>
<dbReference type="PDBsum" id="8T3F"/>
<dbReference type="PDBsum" id="8UT0"/>
<dbReference type="PDBsum" id="8UTI"/>
<dbReference type="PDBsum" id="8XU8"/>
<dbReference type="PDBsum" id="8Y0U"/>
<dbReference type="PDBsum" id="8YLD"/>
<dbReference type="PDBsum" id="8YLR"/>
<dbReference type="PDBsum" id="8Z70"/>
<dbReference type="PDBsum" id="8Z71"/>
<dbReference type="PDBsum" id="9F9S"/>
<dbReference type="EMDB" id="EMD-0047"/>
<dbReference type="EMDB" id="EMD-0048"/>
<dbReference type="EMDB" id="EMD-0049"/>
<dbReference type="EMDB" id="EMD-0949"/>
<dbReference type="EMDB" id="EMD-0950"/>
<dbReference type="EMDB" id="EMD-0951"/>
<dbReference type="EMDB" id="EMD-0952"/>
<dbReference type="EMDB" id="EMD-0953"/>
<dbReference type="EMDB" id="EMD-0954"/>
<dbReference type="EMDB" id="EMD-0955"/>
<dbReference type="EMDB" id="EMD-10098"/>
<dbReference type="EMDB" id="EMD-10262"/>
<dbReference type="EMDB" id="EMD-10315"/>
<dbReference type="EMDB" id="EMD-10377"/>
<dbReference type="EMDB" id="EMD-10396"/>
<dbReference type="EMDB" id="EMD-10397"/>
<dbReference type="EMDB" id="EMD-10398"/>
<dbReference type="EMDB" id="EMD-10431"/>
<dbReference type="EMDB" id="EMD-10537"/>
<dbReference type="EMDB" id="EMD-10713"/>
<dbReference type="EMDB" id="EMD-11096"/>
<dbReference type="EMDB" id="EMD-11097"/>
<dbReference type="EMDB" id="EMD-11160"/>
<dbReference type="EMDB" id="EMD-11358"/>
<dbReference type="EMDB" id="EMD-11359"/>
<dbReference type="EMDB" id="EMD-11360"/>
<dbReference type="EMDB" id="EMD-11361"/>
<dbReference type="EMDB" id="EMD-11362"/>
<dbReference type="EMDB" id="EMD-11363"/>
<dbReference type="EMDB" id="EMD-11439"/>
<dbReference type="EMDB" id="EMD-11457"/>
<dbReference type="EMDB" id="EMD-11608"/>
<dbReference type="EMDB" id="EMD-11807"/>
<dbReference type="EMDB" id="EMD-11808"/>
<dbReference type="EMDB" id="EMD-12081"/>
<dbReference type="EMDB" id="EMD-12534"/>
<dbReference type="EMDB" id="EMD-12535"/>
<dbReference type="EMDB" id="EMD-14861"/>
<dbReference type="EMDB" id="EMD-14921"/>
<dbReference type="EMDB" id="EMD-14978"/>
<dbReference type="EMDB" id="EMD-14979"/>
<dbReference type="EMDB" id="EMD-14990"/>
<dbReference type="EMDB" id="EMD-16127"/>
<dbReference type="EMDB" id="EMD-16182"/>
<dbReference type="EMDB" id="EMD-16191"/>
<dbReference type="EMDB" id="EMD-16347"/>
<dbReference type="EMDB" id="EMD-16349"/>
<dbReference type="EMDB" id="EMD-16470"/>
<dbReference type="EMDB" id="EMD-16525"/>
<dbReference type="EMDB" id="EMD-16533"/>
<dbReference type="EMDB" id="EMD-16541"/>
<dbReference type="EMDB" id="EMD-16563"/>
<dbReference type="EMDB" id="EMD-16591"/>
<dbReference type="EMDB" id="EMD-16594"/>
<dbReference type="EMDB" id="EMD-16609"/>
<dbReference type="EMDB" id="EMD-16616"/>
<dbReference type="EMDB" id="EMD-16634"/>
<dbReference type="EMDB" id="EMD-16648"/>
<dbReference type="EMDB" id="EMD-16684"/>
<dbReference type="EMDB" id="EMD-16702"/>
<dbReference type="EMDB" id="EMD-16729"/>
<dbReference type="EMDB" id="EMD-21644"/>
<dbReference type="EMDB" id="EMD-21859"/>
<dbReference type="EMDB" id="EMD-22196"/>
<dbReference type="EMDB" id="EMD-22198"/>
<dbReference type="EMDB" id="EMD-23934"/>
<dbReference type="EMDB" id="EMD-23935"/>
<dbReference type="EMDB" id="EMD-24235"/>
<dbReference type="EMDB" id="EMD-25441"/>
<dbReference type="EMDB" id="EMD-28610"/>
<dbReference type="EMDB" id="EMD-28632"/>
<dbReference type="EMDB" id="EMD-28633"/>
<dbReference type="EMDB" id="EMD-28634"/>
<dbReference type="EMDB" id="EMD-28635"/>
<dbReference type="EMDB" id="EMD-28636"/>
<dbReference type="EMDB" id="EMD-28642"/>
<dbReference type="EMDB" id="EMD-28643"/>
<dbReference type="EMDB" id="EMD-30574"/>
<dbReference type="EMDB" id="EMD-30585"/>
<dbReference type="EMDB" id="EMD-30588"/>
<dbReference type="EMDB" id="EMD-32790"/>
<dbReference type="EMDB" id="EMD-32791"/>
<dbReference type="EMDB" id="EMD-32792"/>
<dbReference type="EMDB" id="EMD-32793"/>
<dbReference type="EMDB" id="EMD-32794"/>
<dbReference type="EMDB" id="EMD-32795"/>
<dbReference type="EMDB" id="EMD-32796"/>
<dbReference type="EMDB" id="EMD-3461"/>
<dbReference type="EMDB" id="EMD-36839"/>
<dbReference type="EMDB" id="EMD-36945"/>
<dbReference type="EMDB" id="EMD-38660"/>
<dbReference type="EMDB" id="EMD-40990"/>
<dbReference type="EMDB" id="EMD-40991"/>
<dbReference type="EMDB" id="EMD-40992"/>
<dbReference type="EMDB" id="EMD-40993"/>
<dbReference type="EMDB" id="EMD-40997"/>
<dbReference type="EMDB" id="EMD-40998"/>
<dbReference type="EMDB" id="EMD-40999"/>
<dbReference type="EMDB" id="EMD-41000"/>
<dbReference type="EMDB" id="EMD-41001"/>
<dbReference type="EMDB" id="EMD-41002"/>
<dbReference type="EMDB" id="EMD-4140"/>
<dbReference type="EMDB" id="EMD-4214"/>
<dbReference type="EMDB" id="EMD-42525"/>
<dbReference type="EMDB" id="EMD-42540"/>
<dbReference type="EMDB" id="EMD-4427"/>
<dbReference type="EMDB" id="EMD-4474"/>
<dbReference type="EMDB" id="EMD-4792"/>
<dbReference type="EMDB" id="EMD-4793"/>
<dbReference type="EMDB" id="EMD-50259"/>
<dbReference type="EMDB" id="EMD-6695"/>
<dbReference type="EMDB" id="EMD-6696"/>
<dbReference type="EMDB" id="EMD-8473"/>
<dbReference type="EMDB" id="EMD-8859"/>
<dbReference type="EMDB" id="EMD-9964"/>
<dbReference type="SMR" id="P0CX31"/>
<dbReference type="BioGRID" id="34923">
    <property type="interactions" value="162"/>
</dbReference>
<dbReference type="BioGRID" id="36817">
    <property type="interactions" value="438"/>
</dbReference>
<dbReference type="ComplexPortal" id="CPX-1599">
    <property type="entry name" value="40S cytosolic small ribosomal subunit"/>
</dbReference>
<dbReference type="FunCoup" id="P0CX31">
    <property type="interactions" value="1368"/>
</dbReference>
<dbReference type="IntAct" id="P0CX31">
    <property type="interactions" value="91"/>
</dbReference>
<dbReference type="MINT" id="P0CX31"/>
<dbReference type="STRING" id="4932.YER074W"/>
<dbReference type="CarbonylDB" id="P0CX31"/>
<dbReference type="iPTMnet" id="P0CX31"/>
<dbReference type="PaxDb" id="4932-YER074W"/>
<dbReference type="PeptideAtlas" id="P0CX31"/>
<dbReference type="TopDownProteomics" id="P0CX31"/>
<dbReference type="EnsemblFungi" id="YER074W_mRNA">
    <property type="protein sequence ID" value="YER074W"/>
    <property type="gene ID" value="YER074W"/>
</dbReference>
<dbReference type="EnsemblFungi" id="YIL069C_mRNA">
    <property type="protein sequence ID" value="YIL069C"/>
    <property type="gene ID" value="YIL069C"/>
</dbReference>
<dbReference type="GeneID" id="856805"/>
<dbReference type="KEGG" id="sce:YER074W"/>
<dbReference type="KEGG" id="sce:YIL069C"/>
<dbReference type="AGR" id="SGD:S000000876"/>
<dbReference type="SGD" id="S000000876">
    <property type="gene designation" value="RPS24A"/>
</dbReference>
<dbReference type="VEuPathDB" id="FungiDB:YER074W"/>
<dbReference type="VEuPathDB" id="FungiDB:YIL069C"/>
<dbReference type="eggNOG" id="KOG3424">
    <property type="taxonomic scope" value="Eukaryota"/>
</dbReference>
<dbReference type="HOGENOM" id="CLU_107248_1_0_1"/>
<dbReference type="InParanoid" id="P0CX31"/>
<dbReference type="OMA" id="IRVKKYM"/>
<dbReference type="OrthoDB" id="5571754at2759"/>
<dbReference type="BioCyc" id="YEAST:G3O-30245-MONOMER"/>
<dbReference type="Reactome" id="R-SCE-156827">
    <property type="pathway name" value="L13a-mediated translational silencing of Ceruloplasmin expression"/>
</dbReference>
<dbReference type="Reactome" id="R-SCE-1799339">
    <property type="pathway name" value="SRP-dependent cotranslational protein targeting to membrane"/>
</dbReference>
<dbReference type="Reactome" id="R-SCE-72649">
    <property type="pathway name" value="Translation initiation complex formation"/>
</dbReference>
<dbReference type="Reactome" id="R-SCE-72689">
    <property type="pathway name" value="Formation of a pool of free 40S subunits"/>
</dbReference>
<dbReference type="Reactome" id="R-SCE-72695">
    <property type="pathway name" value="Formation of the ternary complex, and subsequently, the 43S complex"/>
</dbReference>
<dbReference type="Reactome" id="R-SCE-72702">
    <property type="pathway name" value="Ribosomal scanning and start codon recognition"/>
</dbReference>
<dbReference type="Reactome" id="R-SCE-72706">
    <property type="pathway name" value="GTP hydrolysis and joining of the 60S ribosomal subunit"/>
</dbReference>
<dbReference type="Reactome" id="R-SCE-975956">
    <property type="pathway name" value="Nonsense Mediated Decay (NMD) independent of the Exon Junction Complex (EJC)"/>
</dbReference>
<dbReference type="Reactome" id="R-SCE-975957">
    <property type="pathway name" value="Nonsense Mediated Decay (NMD) enhanced by the Exon Junction Complex (EJC)"/>
</dbReference>
<dbReference type="BioGRID-ORCS" id="854741">
    <property type="hits" value="1 hit in 10 CRISPR screens"/>
</dbReference>
<dbReference type="BioGRID-ORCS" id="856805">
    <property type="hits" value="3 hits in 10 CRISPR screens"/>
</dbReference>
<dbReference type="EvolutionaryTrace" id="P0CX31"/>
<dbReference type="PRO" id="PR:P0CX31"/>
<dbReference type="Proteomes" id="UP000002311">
    <property type="component" value="Chromosome V"/>
</dbReference>
<dbReference type="RNAct" id="P0CX31">
    <property type="molecule type" value="protein"/>
</dbReference>
<dbReference type="ExpressionAtlas" id="P0CX31">
    <property type="expression patterns" value="baseline and differential"/>
</dbReference>
<dbReference type="GO" id="GO:0005829">
    <property type="term" value="C:cytosol"/>
    <property type="evidence" value="ECO:0000304"/>
    <property type="project" value="Reactome"/>
</dbReference>
<dbReference type="GO" id="GO:0022627">
    <property type="term" value="C:cytosolic small ribosomal subunit"/>
    <property type="evidence" value="ECO:0000303"/>
    <property type="project" value="SGD"/>
</dbReference>
<dbReference type="GO" id="GO:0005739">
    <property type="term" value="C:mitochondrion"/>
    <property type="evidence" value="ECO:0007005"/>
    <property type="project" value="SGD"/>
</dbReference>
<dbReference type="GO" id="GO:0003735">
    <property type="term" value="F:structural constituent of ribosome"/>
    <property type="evidence" value="ECO:0000303"/>
    <property type="project" value="SGD"/>
</dbReference>
<dbReference type="GO" id="GO:0002181">
    <property type="term" value="P:cytoplasmic translation"/>
    <property type="evidence" value="ECO:0000303"/>
    <property type="project" value="SGD"/>
</dbReference>
<dbReference type="GO" id="GO:0000462">
    <property type="term" value="P:maturation of SSU-rRNA from tricistronic rRNA transcript (SSU-rRNA, 5.8S rRNA, LSU-rRNA)"/>
    <property type="evidence" value="ECO:0000316"/>
    <property type="project" value="SGD"/>
</dbReference>
<dbReference type="FunFam" id="3.30.70.3370:FF:000001">
    <property type="entry name" value="40S ribosomal protein S24"/>
    <property type="match status" value="1"/>
</dbReference>
<dbReference type="Gene3D" id="3.30.70.3370">
    <property type="match status" value="1"/>
</dbReference>
<dbReference type="HAMAP" id="MF_00545">
    <property type="entry name" value="Ribosomal_eS24"/>
    <property type="match status" value="1"/>
</dbReference>
<dbReference type="InterPro" id="IPR053709">
    <property type="entry name" value="eRP_eS24_sf"/>
</dbReference>
<dbReference type="InterPro" id="IPR001976">
    <property type="entry name" value="Ribosomal_eS24"/>
</dbReference>
<dbReference type="InterPro" id="IPR018098">
    <property type="entry name" value="Ribosomal_eS24_CS"/>
</dbReference>
<dbReference type="InterPro" id="IPR012678">
    <property type="entry name" value="Ribosomal_uL23/eL15/eS24_sf"/>
</dbReference>
<dbReference type="PANTHER" id="PTHR10496">
    <property type="entry name" value="40S RIBOSOMAL PROTEIN S24"/>
    <property type="match status" value="1"/>
</dbReference>
<dbReference type="Pfam" id="PF01282">
    <property type="entry name" value="Ribosomal_S24e"/>
    <property type="match status" value="1"/>
</dbReference>
<dbReference type="SUPFAM" id="SSF54189">
    <property type="entry name" value="Ribosomal proteins S24e, L23 and L15e"/>
    <property type="match status" value="1"/>
</dbReference>
<dbReference type="PROSITE" id="PS00529">
    <property type="entry name" value="RIBOSOMAL_S24E"/>
    <property type="match status" value="1"/>
</dbReference>
<feature type="initiator methionine" description="Removed" evidence="2 4 14">
    <location>
        <position position="1"/>
    </location>
</feature>
<feature type="chain" id="PRO_0000137636" description="Small ribosomal subunit protein eS24A">
    <location>
        <begin position="2"/>
        <end position="135"/>
    </location>
</feature>
<feature type="region of interest" description="Disordered" evidence="1">
    <location>
        <begin position="102"/>
        <end position="135"/>
    </location>
</feature>
<feature type="compositionally biased region" description="Basic residues" evidence="1">
    <location>
        <begin position="105"/>
        <end position="115"/>
    </location>
</feature>
<feature type="compositionally biased region" description="Basic residues" evidence="1">
    <location>
        <begin position="124"/>
        <end position="135"/>
    </location>
</feature>
<feature type="modified residue" description="N-acetylserine" evidence="2 4 14">
    <location>
        <position position="2"/>
    </location>
</feature>
<feature type="modified residue" description="Phosphoserine" evidence="11">
    <location>
        <position position="14"/>
    </location>
</feature>
<feature type="modified residue" description="Phosphoserine" evidence="12">
    <location>
        <position position="56"/>
    </location>
</feature>
<feature type="cross-link" description="Glycyl lysine isopeptide (Lys-Gly) (interchain with G-Cter in ubiquitin)" evidence="13">
    <location>
        <position position="21"/>
    </location>
</feature>
<feature type="sequence conflict" description="In Ref. 3; AA sequence." evidence="8" ref="3">
    <original>P</original>
    <variation>D</variation>
    <location>
        <position position="16"/>
    </location>
</feature>
<feature type="strand" evidence="17">
    <location>
        <begin position="6"/>
        <end position="15"/>
    </location>
</feature>
<feature type="helix" evidence="17">
    <location>
        <begin position="16"/>
        <end position="18"/>
    </location>
</feature>
<feature type="strand" evidence="17">
    <location>
        <begin position="20"/>
        <end position="28"/>
    </location>
</feature>
<feature type="strand" evidence="16">
    <location>
        <begin position="30"/>
        <end position="33"/>
    </location>
</feature>
<feature type="helix" evidence="17">
    <location>
        <begin position="37"/>
        <end position="47"/>
    </location>
</feature>
<feature type="helix" evidence="17">
    <location>
        <begin position="52"/>
        <end position="54"/>
    </location>
</feature>
<feature type="strand" evidence="17">
    <location>
        <begin position="55"/>
        <end position="62"/>
    </location>
</feature>
<feature type="strand" evidence="17">
    <location>
        <begin position="66"/>
        <end position="77"/>
    </location>
</feature>
<feature type="helix" evidence="17">
    <location>
        <begin position="79"/>
        <end position="85"/>
    </location>
</feature>
<feature type="helix" evidence="17">
    <location>
        <begin position="88"/>
        <end position="93"/>
    </location>
</feature>
<feature type="strand" evidence="15">
    <location>
        <begin position="95"/>
        <end position="97"/>
    </location>
</feature>
<feature type="helix" evidence="17">
    <location>
        <begin position="105"/>
        <end position="115"/>
    </location>
</feature>
<feature type="strand" evidence="16">
    <location>
        <begin position="120"/>
        <end position="122"/>
    </location>
</feature>
<feature type="helix" evidence="17">
    <location>
        <begin position="123"/>
        <end position="131"/>
    </location>
</feature>
<reference key="1">
    <citation type="journal article" date="1997" name="Nature">
        <title>The nucleotide sequence of Saccharomyces cerevisiae chromosome V.</title>
        <authorList>
            <person name="Dietrich F.S."/>
            <person name="Mulligan J.T."/>
            <person name="Hennessy K.M."/>
            <person name="Yelton M.A."/>
            <person name="Allen E."/>
            <person name="Araujo R."/>
            <person name="Aviles E."/>
            <person name="Berno A."/>
            <person name="Brennan T."/>
            <person name="Carpenter J."/>
            <person name="Chen E."/>
            <person name="Cherry J.M."/>
            <person name="Chung E."/>
            <person name="Duncan M."/>
            <person name="Guzman E."/>
            <person name="Hartzell G."/>
            <person name="Hunicke-Smith S."/>
            <person name="Hyman R.W."/>
            <person name="Kayser A."/>
            <person name="Komp C."/>
            <person name="Lashkari D."/>
            <person name="Lew H."/>
            <person name="Lin D."/>
            <person name="Mosedale D."/>
            <person name="Nakahara K."/>
            <person name="Namath A."/>
            <person name="Norgren R."/>
            <person name="Oefner P."/>
            <person name="Oh C."/>
            <person name="Petel F.X."/>
            <person name="Roberts D."/>
            <person name="Sehl P."/>
            <person name="Schramm S."/>
            <person name="Shogren T."/>
            <person name="Smith V."/>
            <person name="Taylor P."/>
            <person name="Wei Y."/>
            <person name="Botstein D."/>
            <person name="Davis R.W."/>
        </authorList>
    </citation>
    <scope>NUCLEOTIDE SEQUENCE [LARGE SCALE GENOMIC DNA]</scope>
    <source>
        <strain>ATCC 204508 / S288c</strain>
    </source>
</reference>
<reference key="2">
    <citation type="journal article" date="2014" name="G3 (Bethesda)">
        <title>The reference genome sequence of Saccharomyces cerevisiae: Then and now.</title>
        <authorList>
            <person name="Engel S.R."/>
            <person name="Dietrich F.S."/>
            <person name="Fisk D.G."/>
            <person name="Binkley G."/>
            <person name="Balakrishnan R."/>
            <person name="Costanzo M.C."/>
            <person name="Dwight S.S."/>
            <person name="Hitz B.C."/>
            <person name="Karra K."/>
            <person name="Nash R.S."/>
            <person name="Weng S."/>
            <person name="Wong E.D."/>
            <person name="Lloyd P."/>
            <person name="Skrzypek M.S."/>
            <person name="Miyasato S.R."/>
            <person name="Simison M."/>
            <person name="Cherry J.M."/>
        </authorList>
    </citation>
    <scope>GENOME REANNOTATION</scope>
    <source>
        <strain>ATCC 204508 / S288c</strain>
    </source>
</reference>
<reference key="3">
    <citation type="journal article" date="1992" name="J. Biol. Chem.">
        <title>NH2-terminal acetylation of ribosomal proteins of Saccharomyces cerevisiae.</title>
        <authorList>
            <person name="Takakura H."/>
            <person name="Tsunasawa S."/>
            <person name="Miyagi M."/>
            <person name="Warner J.R."/>
        </authorList>
    </citation>
    <scope>PROTEIN SEQUENCE OF 2-16</scope>
    <scope>ACETYLATION AT SER-2 BY NATA</scope>
</reference>
<reference key="4">
    <citation type="journal article" date="1998" name="Yeast">
        <title>The list of cytoplasmic ribosomal proteins of Saccharomyces cerevisiae.</title>
        <authorList>
            <person name="Planta R.J."/>
            <person name="Mager W.H."/>
        </authorList>
    </citation>
    <scope>NOMENCLATURE</scope>
    <scope>SUBUNIT</scope>
</reference>
<reference key="5">
    <citation type="journal article" date="1999" name="J. Biol. Chem.">
        <title>The action of N-terminal acetyltransferases on yeast ribosomal proteins.</title>
        <authorList>
            <person name="Arnold R.J."/>
            <person name="Polevoda B."/>
            <person name="Reilly J.P."/>
            <person name="Sherman F."/>
        </authorList>
    </citation>
    <scope>CLEAVAGE OF INITIATOR METHIONINE</scope>
    <scope>ACETYLATION AT SER-2 BY NATA</scope>
</reference>
<reference key="6">
    <citation type="journal article" date="2003" name="Nature">
        <title>Global analysis of protein localization in budding yeast.</title>
        <authorList>
            <person name="Huh W.-K."/>
            <person name="Falvo J.V."/>
            <person name="Gerke L.C."/>
            <person name="Carroll A.S."/>
            <person name="Howson R.W."/>
            <person name="Weissman J.S."/>
            <person name="O'Shea E.K."/>
        </authorList>
    </citation>
    <scope>SUBCELLULAR LOCATION [LARGE SCALE ANALYSIS]</scope>
</reference>
<reference key="7">
    <citation type="journal article" date="2008" name="Mol. Cell. Proteomics">
        <title>A multidimensional chromatography technology for in-depth phosphoproteome analysis.</title>
        <authorList>
            <person name="Albuquerque C.P."/>
            <person name="Smolka M.B."/>
            <person name="Payne S.H."/>
            <person name="Bafna V."/>
            <person name="Eng J."/>
            <person name="Zhou H."/>
        </authorList>
    </citation>
    <scope>PHOSPHORYLATION [LARGE SCALE ANALYSIS] AT SER-14</scope>
    <scope>IDENTIFICATION BY MASS SPECTROMETRY [LARGE SCALE ANALYSIS]</scope>
</reference>
<reference key="8">
    <citation type="journal article" date="2009" name="Science">
        <title>Global analysis of Cdk1 substrate phosphorylation sites provides insights into evolution.</title>
        <authorList>
            <person name="Holt L.J."/>
            <person name="Tuch B.B."/>
            <person name="Villen J."/>
            <person name="Johnson A.D."/>
            <person name="Gygi S.P."/>
            <person name="Morgan D.O."/>
        </authorList>
    </citation>
    <scope>PHOSPHORYLATION [LARGE SCALE ANALYSIS] AT SER-56</scope>
    <scope>IDENTIFICATION BY MASS SPECTROMETRY [LARGE SCALE ANALYSIS]</scope>
</reference>
<reference key="9">
    <citation type="journal article" date="2012" name="Proc. Natl. Acad. Sci. U.S.A.">
        <title>N-terminal acetylome analyses and functional insights of the N-terminal acetyltransferase NatB.</title>
        <authorList>
            <person name="Van Damme P."/>
            <person name="Lasa M."/>
            <person name="Polevoda B."/>
            <person name="Gazquez C."/>
            <person name="Elosegui-Artola A."/>
            <person name="Kim D.S."/>
            <person name="De Juan-Pardo E."/>
            <person name="Demeyer K."/>
            <person name="Hole K."/>
            <person name="Larrea E."/>
            <person name="Timmerman E."/>
            <person name="Prieto J."/>
            <person name="Arnesen T."/>
            <person name="Sherman F."/>
            <person name="Gevaert K."/>
            <person name="Aldabe R."/>
        </authorList>
    </citation>
    <scope>ACETYLATION [LARGE SCALE ANALYSIS] AT SER-2</scope>
    <scope>CLEAVAGE OF INITIATOR METHIONINE [LARGE SCALE ANALYSIS]</scope>
    <scope>IDENTIFICATION BY MASS SPECTROMETRY [LARGE SCALE ANALYSIS]</scope>
</reference>
<reference key="10">
    <citation type="journal article" date="2012" name="Proteomics">
        <title>Sites of ubiquitin attachment in Saccharomyces cerevisiae.</title>
        <authorList>
            <person name="Starita L.M."/>
            <person name="Lo R.S."/>
            <person name="Eng J.K."/>
            <person name="von Haller P.D."/>
            <person name="Fields S."/>
        </authorList>
    </citation>
    <scope>UBIQUITINATION [LARGE SCALE ANALYSIS] AT LYS-21</scope>
    <scope>IDENTIFICATION BY MASS SPECTROMETRY [LARGE SCALE ANALYSIS]</scope>
</reference>
<reference key="11">
    <citation type="journal article" date="2014" name="Curr. Opin. Struct. Biol.">
        <title>A new system for naming ribosomal proteins.</title>
        <authorList>
            <person name="Ban N."/>
            <person name="Beckmann R."/>
            <person name="Cate J.H.D."/>
            <person name="Dinman J.D."/>
            <person name="Dragon F."/>
            <person name="Ellis S.R."/>
            <person name="Lafontaine D.L.J."/>
            <person name="Lindahl L."/>
            <person name="Liljas A."/>
            <person name="Lipton J.M."/>
            <person name="McAlear M.A."/>
            <person name="Moore P.B."/>
            <person name="Noller H.F."/>
            <person name="Ortega J."/>
            <person name="Panse V.G."/>
            <person name="Ramakrishnan V."/>
            <person name="Spahn C.M.T."/>
            <person name="Steitz T.A."/>
            <person name="Tchorzewski M."/>
            <person name="Tollervey D."/>
            <person name="Warren A.J."/>
            <person name="Williamson J.R."/>
            <person name="Wilson D."/>
            <person name="Yonath A."/>
            <person name="Yusupov M."/>
        </authorList>
    </citation>
    <scope>NOMENCLATURE</scope>
</reference>
<reference key="12">
    <citation type="journal article" date="2011" name="Science">
        <title>The structure of the eukaryotic ribosome at 3.0 A resolution.</title>
        <authorList>
            <person name="Ben-Shem A."/>
            <person name="Garreau de Loubresse N."/>
            <person name="Melnikov S."/>
            <person name="Jenner L."/>
            <person name="Yusupova G."/>
            <person name="Yusupov M."/>
        </authorList>
    </citation>
    <scope>X-RAY CRYSTALLOGRAPHY (3.00 ANGSTROMS) OF 80S RIBOSOME</scope>
    <scope>SUBUNIT</scope>
    <scope>SUBCELLULAR LOCATION</scope>
</reference>
<gene>
    <name evidence="7" type="primary">RPS24A</name>
    <name type="synonym">RPS24EA</name>
    <name type="ordered locus">YER074W</name>
</gene>
<evidence type="ECO:0000256" key="1">
    <source>
        <dbReference type="SAM" id="MobiDB-lite"/>
    </source>
</evidence>
<evidence type="ECO:0000269" key="2">
    <source>
    </source>
</evidence>
<evidence type="ECO:0000269" key="3">
    <source>
    </source>
</evidence>
<evidence type="ECO:0000269" key="4">
    <source>
    </source>
</evidence>
<evidence type="ECO:0000269" key="5">
    <source>
    </source>
</evidence>
<evidence type="ECO:0000303" key="6">
    <source>
    </source>
</evidence>
<evidence type="ECO:0000303" key="7">
    <source>
    </source>
</evidence>
<evidence type="ECO:0000305" key="8"/>
<evidence type="ECO:0000305" key="9">
    <source>
    </source>
</evidence>
<evidence type="ECO:0000305" key="10">
    <source>
    </source>
</evidence>
<evidence type="ECO:0007744" key="11">
    <source>
    </source>
</evidence>
<evidence type="ECO:0007744" key="12">
    <source>
    </source>
</evidence>
<evidence type="ECO:0007744" key="13">
    <source>
    </source>
</evidence>
<evidence type="ECO:0007744" key="14">
    <source>
    </source>
</evidence>
<evidence type="ECO:0007829" key="15">
    <source>
        <dbReference type="PDB" id="6FAI"/>
    </source>
</evidence>
<evidence type="ECO:0007829" key="16">
    <source>
        <dbReference type="PDB" id="6ZVI"/>
    </source>
</evidence>
<evidence type="ECO:0007829" key="17">
    <source>
        <dbReference type="PDB" id="8C01"/>
    </source>
</evidence>
<comment type="function">
    <text evidence="9">Component of the ribosome, a large ribonucleoprotein complex responsible for the synthesis of proteins in the cell. The small ribosomal subunit (SSU) binds messenger RNAs (mRNAs) and translates the encoded message by selecting cognate aminoacyl-transfer RNA (tRNA) molecules. The large subunit (LSU) contains the ribosomal catalytic site termed the peptidyl transferase center (PTC), which catalyzes the formation of peptide bonds, thereby polymerizing the amino acids delivered by tRNAs into a polypeptide chain. The nascent polypeptides leave the ribosome through a tunnel in the LSU and interact with protein factors that function in enzymatic processing, targeting, and the membrane insertion of nascent chains at the exit of the ribosomal tunnel.</text>
</comment>
<comment type="subunit">
    <text evidence="5 10">Component of the small ribosomal subunit (SSU). Mature yeast ribosomes consist of a small (40S) and a large (60S) subunit. The 40S small subunit contains 1 molecule of ribosomal RNA (18S rRNA) and 33 different proteins (encoded by 57 genes). The large 60S subunit contains 3 rRNA molecules (25S, 5.8S and 5S rRNA) and 46 different proteins (encoded by 81 genes) (PubMed:22096102, PubMed:9559554).</text>
</comment>
<comment type="subcellular location">
    <subcellularLocation>
        <location evidence="3 5">Cytoplasm</location>
    </subcellularLocation>
</comment>
<comment type="PTM">
    <text evidence="2 4">N-terminally acetylated by acetyltransferase NatA. Also partially acetylated by NatC.</text>
</comment>
<comment type="miscellaneous">
    <text evidence="8">There are 2 genes for eS24 in yeast.</text>
</comment>
<comment type="similarity">
    <text evidence="8">Belongs to the eukaryotic ribosomal protein eS24 family.</text>
</comment>
<organism>
    <name type="scientific">Saccharomyces cerevisiae (strain ATCC 204508 / S288c)</name>
    <name type="common">Baker's yeast</name>
    <dbReference type="NCBI Taxonomy" id="559292"/>
    <lineage>
        <taxon>Eukaryota</taxon>
        <taxon>Fungi</taxon>
        <taxon>Dikarya</taxon>
        <taxon>Ascomycota</taxon>
        <taxon>Saccharomycotina</taxon>
        <taxon>Saccharomycetes</taxon>
        <taxon>Saccharomycetales</taxon>
        <taxon>Saccharomycetaceae</taxon>
        <taxon>Saccharomyces</taxon>
    </lineage>
</organism>
<protein>
    <recommendedName>
        <fullName evidence="6">Small ribosomal subunit protein eS24A</fullName>
    </recommendedName>
    <alternativeName>
        <fullName evidence="7">40S ribosomal protein S24-A</fullName>
    </alternativeName>
    <alternativeName>
        <fullName>RP50</fullName>
    </alternativeName>
</protein>
<sequence length="135" mass="15329">MSDAVTIRTRKVISNPLLARKQFVVDVLHPNRANVSKDELREKLAEVYKAEKDAVSVFGFRTQFGGGKSVGFGLVYNSVAEAKKFEPTYRLVRYGLAEKVEKASRQQRKQKKNRDKKIFGTGKRLAKKVARRNAD</sequence>
<accession>P0CX31</accession>
<accession>D3DLX9</accession>
<accession>P26782</accession>
<keyword id="KW-0002">3D-structure</keyword>
<keyword id="KW-0007">Acetylation</keyword>
<keyword id="KW-0963">Cytoplasm</keyword>
<keyword id="KW-0903">Direct protein sequencing</keyword>
<keyword id="KW-1017">Isopeptide bond</keyword>
<keyword id="KW-0597">Phosphoprotein</keyword>
<keyword id="KW-1185">Reference proteome</keyword>
<keyword id="KW-0687">Ribonucleoprotein</keyword>
<keyword id="KW-0689">Ribosomal protein</keyword>
<keyword id="KW-0832">Ubl conjugation</keyword>
<proteinExistence type="evidence at protein level"/>